<comment type="subunit">
    <text evidence="1 2 3 4">Component of the mitochondrial large ribosomal subunit (mt-LSU) (PubMed:25278503, PubMed:25838379, PubMed:28892042, PubMed:35177605). Mature mammalian 55S mitochondrial ribosomes consist of a small (28S) and a large (39S) subunit. The 28S small subunit contains a 12S ribosomal RNA (12S mt-rRNA) and 30 different proteins. The 39S large subunit contains a 16S rRNA (16S mt-rRNA), a copy of mitochondrial valine transfer RNA (mt-tRNA(Val)), which plays an integral structural role, and 52 different proteins.</text>
</comment>
<comment type="interaction">
    <interactant intactId="EBI-1055359">
        <id>Q9BQC6</id>
    </interactant>
    <interactant intactId="EBI-7062247">
        <id>Q9UHD4</id>
        <label>CIDEB</label>
    </interactant>
    <organismsDiffer>false</organismsDiffer>
    <experiments>3</experiments>
</comment>
<comment type="interaction">
    <interactant intactId="EBI-1055359">
        <id>Q9BQC6</id>
    </interactant>
    <interactant intactId="EBI-17490413">
        <id>A8MZ59</id>
        <label>LEUTX</label>
    </interactant>
    <organismsDiffer>false</organismsDiffer>
    <experiments>3</experiments>
</comment>
<comment type="subcellular location">
    <subcellularLocation>
        <location evidence="1 2 3">Mitochondrion</location>
    </subcellularLocation>
</comment>
<comment type="similarity">
    <text evidence="6">Belongs to the mitochondrion-specific ribosomal protein mL63 family.</text>
</comment>
<feature type="chain" id="PRO_0000253541" description="Large ribosomal subunit protein mL63">
    <location>
        <begin position="1"/>
        <end position="102"/>
    </location>
</feature>
<feature type="strand" evidence="11">
    <location>
        <begin position="13"/>
        <end position="15"/>
    </location>
</feature>
<feature type="strand" evidence="12">
    <location>
        <begin position="18"/>
        <end position="21"/>
    </location>
</feature>
<feature type="helix" evidence="13">
    <location>
        <begin position="29"/>
        <end position="49"/>
    </location>
</feature>
<feature type="helix" evidence="13">
    <location>
        <begin position="56"/>
        <end position="59"/>
    </location>
</feature>
<feature type="turn" evidence="13">
    <location>
        <begin position="60"/>
        <end position="63"/>
    </location>
</feature>
<feature type="helix" evidence="13">
    <location>
        <begin position="64"/>
        <end position="79"/>
    </location>
</feature>
<feature type="helix" evidence="13">
    <location>
        <begin position="88"/>
        <end position="93"/>
    </location>
</feature>
<feature type="helix" evidence="13">
    <location>
        <begin position="94"/>
        <end position="98"/>
    </location>
</feature>
<keyword id="KW-0002">3D-structure</keyword>
<keyword id="KW-0496">Mitochondrion</keyword>
<keyword id="KW-1267">Proteomics identification</keyword>
<keyword id="KW-1185">Reference proteome</keyword>
<keyword id="KW-0687">Ribonucleoprotein</keyword>
<keyword id="KW-0689">Ribosomal protein</keyword>
<protein>
    <recommendedName>
        <fullName evidence="5">Large ribosomal subunit protein mL63</fullName>
    </recommendedName>
    <alternativeName>
        <fullName>Mitochondrial ribosomal protein 63</fullName>
    </alternativeName>
    <alternativeName>
        <fullName>Mitochondrial ribosomal protein L57</fullName>
    </alternativeName>
    <alternativeName>
        <fullName>Ribosomal protein 63, mitochondrial</fullName>
        <shortName>hMRP63</shortName>
    </alternativeName>
</protein>
<dbReference type="EMBL" id="AB049957">
    <property type="protein sequence ID" value="BAB41010.1"/>
    <property type="molecule type" value="mRNA"/>
</dbReference>
<dbReference type="EMBL" id="AL158032">
    <property type="status" value="NOT_ANNOTATED_CDS"/>
    <property type="molecule type" value="Genomic_DNA"/>
</dbReference>
<dbReference type="EMBL" id="CH471075">
    <property type="protein sequence ID" value="EAX08296.1"/>
    <property type="molecule type" value="Genomic_DNA"/>
</dbReference>
<dbReference type="EMBL" id="BC023616">
    <property type="protein sequence ID" value="AAH23616.1"/>
    <property type="molecule type" value="mRNA"/>
</dbReference>
<dbReference type="EMBL" id="BC068492">
    <property type="protein sequence ID" value="AAH68492.1"/>
    <property type="molecule type" value="mRNA"/>
</dbReference>
<dbReference type="CCDS" id="CCDS9296.1"/>
<dbReference type="RefSeq" id="NP_076931.1">
    <property type="nucleotide sequence ID" value="NM_024026.5"/>
</dbReference>
<dbReference type="RefSeq" id="XP_016876229.1">
    <property type="nucleotide sequence ID" value="XM_017020740.3"/>
</dbReference>
<dbReference type="RefSeq" id="XP_054230923.1">
    <property type="nucleotide sequence ID" value="XM_054374948.1"/>
</dbReference>
<dbReference type="PDB" id="3J7Y">
    <property type="method" value="EM"/>
    <property type="resolution" value="3.40 A"/>
    <property type="chains" value="o=1-102"/>
</dbReference>
<dbReference type="PDB" id="3J9M">
    <property type="method" value="EM"/>
    <property type="resolution" value="3.50 A"/>
    <property type="chains" value="o=1-102"/>
</dbReference>
<dbReference type="PDB" id="5OOL">
    <property type="method" value="EM"/>
    <property type="resolution" value="3.06 A"/>
    <property type="chains" value="o=1-102"/>
</dbReference>
<dbReference type="PDB" id="5OOM">
    <property type="method" value="EM"/>
    <property type="resolution" value="3.03 A"/>
    <property type="chains" value="o=1-102"/>
</dbReference>
<dbReference type="PDB" id="6I9R">
    <property type="method" value="EM"/>
    <property type="resolution" value="3.90 A"/>
    <property type="chains" value="o=1-102"/>
</dbReference>
<dbReference type="PDB" id="6NU2">
    <property type="method" value="EM"/>
    <property type="resolution" value="3.90 A"/>
    <property type="chains" value="o=9-102"/>
</dbReference>
<dbReference type="PDB" id="6NU3">
    <property type="method" value="EM"/>
    <property type="resolution" value="4.40 A"/>
    <property type="chains" value="o=1-102"/>
</dbReference>
<dbReference type="PDB" id="6VLZ">
    <property type="method" value="EM"/>
    <property type="resolution" value="2.97 A"/>
    <property type="chains" value="o=1-102"/>
</dbReference>
<dbReference type="PDB" id="6VMI">
    <property type="method" value="EM"/>
    <property type="resolution" value="2.96 A"/>
    <property type="chains" value="o=1-102"/>
</dbReference>
<dbReference type="PDB" id="6ZM5">
    <property type="method" value="EM"/>
    <property type="resolution" value="2.89 A"/>
    <property type="chains" value="o=1-102"/>
</dbReference>
<dbReference type="PDB" id="6ZM6">
    <property type="method" value="EM"/>
    <property type="resolution" value="2.59 A"/>
    <property type="chains" value="o=1-102"/>
</dbReference>
<dbReference type="PDB" id="6ZS9">
    <property type="method" value="EM"/>
    <property type="resolution" value="4.00 A"/>
    <property type="chains" value="o=1-102"/>
</dbReference>
<dbReference type="PDB" id="6ZSA">
    <property type="method" value="EM"/>
    <property type="resolution" value="4.00 A"/>
    <property type="chains" value="o=1-102"/>
</dbReference>
<dbReference type="PDB" id="6ZSB">
    <property type="method" value="EM"/>
    <property type="resolution" value="4.50 A"/>
    <property type="chains" value="o=1-102"/>
</dbReference>
<dbReference type="PDB" id="6ZSC">
    <property type="method" value="EM"/>
    <property type="resolution" value="3.50 A"/>
    <property type="chains" value="o=1-102"/>
</dbReference>
<dbReference type="PDB" id="6ZSD">
    <property type="method" value="EM"/>
    <property type="resolution" value="3.70 A"/>
    <property type="chains" value="o=1-102"/>
</dbReference>
<dbReference type="PDB" id="6ZSE">
    <property type="method" value="EM"/>
    <property type="resolution" value="5.00 A"/>
    <property type="chains" value="o=1-102"/>
</dbReference>
<dbReference type="PDB" id="6ZSG">
    <property type="method" value="EM"/>
    <property type="resolution" value="4.00 A"/>
    <property type="chains" value="o=1-102"/>
</dbReference>
<dbReference type="PDB" id="7A5F">
    <property type="method" value="EM"/>
    <property type="resolution" value="4.40 A"/>
    <property type="chains" value="o3=1-102"/>
</dbReference>
<dbReference type="PDB" id="7A5G">
    <property type="method" value="EM"/>
    <property type="resolution" value="4.33 A"/>
    <property type="chains" value="o3=1-102"/>
</dbReference>
<dbReference type="PDB" id="7A5H">
    <property type="method" value="EM"/>
    <property type="resolution" value="3.30 A"/>
    <property type="chains" value="o=1-102"/>
</dbReference>
<dbReference type="PDB" id="7A5I">
    <property type="method" value="EM"/>
    <property type="resolution" value="3.70 A"/>
    <property type="chains" value="o3=1-102"/>
</dbReference>
<dbReference type="PDB" id="7A5J">
    <property type="method" value="EM"/>
    <property type="resolution" value="3.10 A"/>
    <property type="chains" value="o=1-102"/>
</dbReference>
<dbReference type="PDB" id="7A5K">
    <property type="method" value="EM"/>
    <property type="resolution" value="3.70 A"/>
    <property type="chains" value="o3=1-102"/>
</dbReference>
<dbReference type="PDB" id="7L08">
    <property type="method" value="EM"/>
    <property type="resolution" value="3.49 A"/>
    <property type="chains" value="o=1-102"/>
</dbReference>
<dbReference type="PDB" id="7L20">
    <property type="method" value="EM"/>
    <property type="resolution" value="3.15 A"/>
    <property type="chains" value="o=1-102"/>
</dbReference>
<dbReference type="PDB" id="7O9K">
    <property type="method" value="EM"/>
    <property type="resolution" value="3.10 A"/>
    <property type="chains" value="o=1-102"/>
</dbReference>
<dbReference type="PDB" id="7O9M">
    <property type="method" value="EM"/>
    <property type="resolution" value="2.50 A"/>
    <property type="chains" value="o=1-102"/>
</dbReference>
<dbReference type="PDB" id="7ODR">
    <property type="method" value="EM"/>
    <property type="resolution" value="2.90 A"/>
    <property type="chains" value="o=1-102"/>
</dbReference>
<dbReference type="PDB" id="7ODS">
    <property type="method" value="EM"/>
    <property type="resolution" value="3.10 A"/>
    <property type="chains" value="o=1-102"/>
</dbReference>
<dbReference type="PDB" id="7ODT">
    <property type="method" value="EM"/>
    <property type="resolution" value="3.10 A"/>
    <property type="chains" value="o=1-102"/>
</dbReference>
<dbReference type="PDB" id="7OF0">
    <property type="method" value="EM"/>
    <property type="resolution" value="2.20 A"/>
    <property type="chains" value="o=1-102"/>
</dbReference>
<dbReference type="PDB" id="7OF2">
    <property type="method" value="EM"/>
    <property type="resolution" value="2.70 A"/>
    <property type="chains" value="o=1-102"/>
</dbReference>
<dbReference type="PDB" id="7OF3">
    <property type="method" value="EM"/>
    <property type="resolution" value="2.70 A"/>
    <property type="chains" value="o=1-102"/>
</dbReference>
<dbReference type="PDB" id="7OF4">
    <property type="method" value="EM"/>
    <property type="resolution" value="2.70 A"/>
    <property type="chains" value="o=1-102"/>
</dbReference>
<dbReference type="PDB" id="7OF5">
    <property type="method" value="EM"/>
    <property type="resolution" value="2.90 A"/>
    <property type="chains" value="o=1-102"/>
</dbReference>
<dbReference type="PDB" id="7OF6">
    <property type="method" value="EM"/>
    <property type="resolution" value="2.60 A"/>
    <property type="chains" value="o=1-102"/>
</dbReference>
<dbReference type="PDB" id="7OF7">
    <property type="method" value="EM"/>
    <property type="resolution" value="2.50 A"/>
    <property type="chains" value="o=1-102"/>
</dbReference>
<dbReference type="PDB" id="7OG4">
    <property type="method" value="EM"/>
    <property type="resolution" value="3.80 A"/>
    <property type="chains" value="o=1-102"/>
</dbReference>
<dbReference type="PDB" id="7OI6">
    <property type="method" value="EM"/>
    <property type="resolution" value="5.70 A"/>
    <property type="chains" value="o=1-102"/>
</dbReference>
<dbReference type="PDB" id="7OI7">
    <property type="method" value="EM"/>
    <property type="resolution" value="3.50 A"/>
    <property type="chains" value="o=1-102"/>
</dbReference>
<dbReference type="PDB" id="7OI8">
    <property type="method" value="EM"/>
    <property type="resolution" value="3.50 A"/>
    <property type="chains" value="o=1-102"/>
</dbReference>
<dbReference type="PDB" id="7OI9">
    <property type="method" value="EM"/>
    <property type="resolution" value="3.30 A"/>
    <property type="chains" value="o=1-102"/>
</dbReference>
<dbReference type="PDB" id="7OIA">
    <property type="method" value="EM"/>
    <property type="resolution" value="3.20 A"/>
    <property type="chains" value="o=1-102"/>
</dbReference>
<dbReference type="PDB" id="7OIB">
    <property type="method" value="EM"/>
    <property type="resolution" value="3.30 A"/>
    <property type="chains" value="o=1-102"/>
</dbReference>
<dbReference type="PDB" id="7OIC">
    <property type="method" value="EM"/>
    <property type="resolution" value="3.10 A"/>
    <property type="chains" value="o=1-102"/>
</dbReference>
<dbReference type="PDB" id="7OID">
    <property type="method" value="EM"/>
    <property type="resolution" value="3.70 A"/>
    <property type="chains" value="o=1-102"/>
</dbReference>
<dbReference type="PDB" id="7OIE">
    <property type="method" value="EM"/>
    <property type="resolution" value="3.50 A"/>
    <property type="chains" value="o=1-102"/>
</dbReference>
<dbReference type="PDB" id="7PD3">
    <property type="method" value="EM"/>
    <property type="resolution" value="3.40 A"/>
    <property type="chains" value="o=1-102"/>
</dbReference>
<dbReference type="PDB" id="7PO4">
    <property type="method" value="EM"/>
    <property type="resolution" value="2.56 A"/>
    <property type="chains" value="o=1-102"/>
</dbReference>
<dbReference type="PDB" id="7QH6">
    <property type="method" value="EM"/>
    <property type="resolution" value="3.08 A"/>
    <property type="chains" value="o=1-102"/>
</dbReference>
<dbReference type="PDB" id="7QH7">
    <property type="method" value="EM"/>
    <property type="resolution" value="2.89 A"/>
    <property type="chains" value="o=22-102"/>
</dbReference>
<dbReference type="PDB" id="7QI4">
    <property type="method" value="EM"/>
    <property type="resolution" value="2.21 A"/>
    <property type="chains" value="o=1-102"/>
</dbReference>
<dbReference type="PDB" id="7QI5">
    <property type="method" value="EM"/>
    <property type="resolution" value="2.63 A"/>
    <property type="chains" value="o=1-102"/>
</dbReference>
<dbReference type="PDB" id="7QI6">
    <property type="method" value="EM"/>
    <property type="resolution" value="2.98 A"/>
    <property type="chains" value="o=1-102"/>
</dbReference>
<dbReference type="PDB" id="8ANY">
    <property type="method" value="EM"/>
    <property type="resolution" value="2.85 A"/>
    <property type="chains" value="o=1-102"/>
</dbReference>
<dbReference type="PDB" id="8K2A">
    <property type="method" value="EM"/>
    <property type="resolution" value="2.90 A"/>
    <property type="chains" value="L6=1-102"/>
</dbReference>
<dbReference type="PDB" id="8K2B">
    <property type="method" value="EM"/>
    <property type="resolution" value="3.40 A"/>
    <property type="chains" value="L6=1-102"/>
</dbReference>
<dbReference type="PDB" id="8OIR">
    <property type="method" value="EM"/>
    <property type="resolution" value="3.10 A"/>
    <property type="chains" value="Be=1-102"/>
</dbReference>
<dbReference type="PDB" id="8OIT">
    <property type="method" value="EM"/>
    <property type="resolution" value="2.90 A"/>
    <property type="chains" value="Be=1-102"/>
</dbReference>
<dbReference type="PDB" id="8PK0">
    <property type="method" value="EM"/>
    <property type="resolution" value="3.03 A"/>
    <property type="chains" value="o=1-102"/>
</dbReference>
<dbReference type="PDB" id="8QSJ">
    <property type="method" value="EM"/>
    <property type="resolution" value="3.00 A"/>
    <property type="chains" value="o=1-102"/>
</dbReference>
<dbReference type="PDB" id="8QU5">
    <property type="method" value="EM"/>
    <property type="resolution" value="2.42 A"/>
    <property type="chains" value="o=1-102"/>
</dbReference>
<dbReference type="PDB" id="8RRI">
    <property type="method" value="EM"/>
    <property type="resolution" value="2.40 A"/>
    <property type="chains" value="o=1-102"/>
</dbReference>
<dbReference type="PDB" id="8XT0">
    <property type="method" value="EM"/>
    <property type="resolution" value="3.20 A"/>
    <property type="chains" value="L6=1-102"/>
</dbReference>
<dbReference type="PDB" id="8XT1">
    <property type="method" value="EM"/>
    <property type="resolution" value="3.10 A"/>
    <property type="chains" value="L6=1-102"/>
</dbReference>
<dbReference type="PDB" id="8XT2">
    <property type="method" value="EM"/>
    <property type="resolution" value="3.30 A"/>
    <property type="chains" value="L6=1-102"/>
</dbReference>
<dbReference type="PDB" id="8XT3">
    <property type="method" value="EM"/>
    <property type="resolution" value="3.10 A"/>
    <property type="chains" value="L6=1-102"/>
</dbReference>
<dbReference type="PDBsum" id="3J7Y"/>
<dbReference type="PDBsum" id="3J9M"/>
<dbReference type="PDBsum" id="5OOL"/>
<dbReference type="PDBsum" id="5OOM"/>
<dbReference type="PDBsum" id="6I9R"/>
<dbReference type="PDBsum" id="6NU2"/>
<dbReference type="PDBsum" id="6NU3"/>
<dbReference type="PDBsum" id="6VLZ"/>
<dbReference type="PDBsum" id="6VMI"/>
<dbReference type="PDBsum" id="6ZM5"/>
<dbReference type="PDBsum" id="6ZM6"/>
<dbReference type="PDBsum" id="6ZS9"/>
<dbReference type="PDBsum" id="6ZSA"/>
<dbReference type="PDBsum" id="6ZSB"/>
<dbReference type="PDBsum" id="6ZSC"/>
<dbReference type="PDBsum" id="6ZSD"/>
<dbReference type="PDBsum" id="6ZSE"/>
<dbReference type="PDBsum" id="6ZSG"/>
<dbReference type="PDBsum" id="7A5F"/>
<dbReference type="PDBsum" id="7A5G"/>
<dbReference type="PDBsum" id="7A5H"/>
<dbReference type="PDBsum" id="7A5I"/>
<dbReference type="PDBsum" id="7A5J"/>
<dbReference type="PDBsum" id="7A5K"/>
<dbReference type="PDBsum" id="7L08"/>
<dbReference type="PDBsum" id="7L20"/>
<dbReference type="PDBsum" id="7O9K"/>
<dbReference type="PDBsum" id="7O9M"/>
<dbReference type="PDBsum" id="7ODR"/>
<dbReference type="PDBsum" id="7ODS"/>
<dbReference type="PDBsum" id="7ODT"/>
<dbReference type="PDBsum" id="7OF0"/>
<dbReference type="PDBsum" id="7OF2"/>
<dbReference type="PDBsum" id="7OF3"/>
<dbReference type="PDBsum" id="7OF4"/>
<dbReference type="PDBsum" id="7OF5"/>
<dbReference type="PDBsum" id="7OF6"/>
<dbReference type="PDBsum" id="7OF7"/>
<dbReference type="PDBsum" id="7OG4"/>
<dbReference type="PDBsum" id="7OI6"/>
<dbReference type="PDBsum" id="7OI7"/>
<dbReference type="PDBsum" id="7OI8"/>
<dbReference type="PDBsum" id="7OI9"/>
<dbReference type="PDBsum" id="7OIA"/>
<dbReference type="PDBsum" id="7OIB"/>
<dbReference type="PDBsum" id="7OIC"/>
<dbReference type="PDBsum" id="7OID"/>
<dbReference type="PDBsum" id="7OIE"/>
<dbReference type="PDBsum" id="7PD3"/>
<dbReference type="PDBsum" id="7PO4"/>
<dbReference type="PDBsum" id="7QH6"/>
<dbReference type="PDBsum" id="7QH7"/>
<dbReference type="PDBsum" id="7QI4"/>
<dbReference type="PDBsum" id="7QI5"/>
<dbReference type="PDBsum" id="7QI6"/>
<dbReference type="PDBsum" id="8ANY"/>
<dbReference type="PDBsum" id="8K2A"/>
<dbReference type="PDBsum" id="8K2B"/>
<dbReference type="PDBsum" id="8OIR"/>
<dbReference type="PDBsum" id="8OIT"/>
<dbReference type="PDBsum" id="8PK0"/>
<dbReference type="PDBsum" id="8QSJ"/>
<dbReference type="PDBsum" id="8QU5"/>
<dbReference type="PDBsum" id="8RRI"/>
<dbReference type="PDBsum" id="8XT0"/>
<dbReference type="PDBsum" id="8XT1"/>
<dbReference type="PDBsum" id="8XT2"/>
<dbReference type="PDBsum" id="8XT3"/>
<dbReference type="EMDB" id="EMD-0514"/>
<dbReference type="EMDB" id="EMD-0515"/>
<dbReference type="EMDB" id="EMD-11278"/>
<dbReference type="EMDB" id="EMD-11279"/>
<dbReference type="EMDB" id="EMD-11390"/>
<dbReference type="EMDB" id="EMD-11391"/>
<dbReference type="EMDB" id="EMD-11392"/>
<dbReference type="EMDB" id="EMD-11393"/>
<dbReference type="EMDB" id="EMD-11394"/>
<dbReference type="EMDB" id="EMD-11395"/>
<dbReference type="EMDB" id="EMD-11397"/>
<dbReference type="EMDB" id="EMD-11641"/>
<dbReference type="EMDB" id="EMD-11642"/>
<dbReference type="EMDB" id="EMD-11643"/>
<dbReference type="EMDB" id="EMD-11644"/>
<dbReference type="EMDB" id="EMD-11645"/>
<dbReference type="EMDB" id="EMD-11646"/>
<dbReference type="EMDB" id="EMD-12763"/>
<dbReference type="EMDB" id="EMD-12764"/>
<dbReference type="EMDB" id="EMD-12845"/>
<dbReference type="EMDB" id="EMD-12846"/>
<dbReference type="EMDB" id="EMD-12847"/>
<dbReference type="EMDB" id="EMD-12865"/>
<dbReference type="EMDB" id="EMD-12867"/>
<dbReference type="EMDB" id="EMD-12868"/>
<dbReference type="EMDB" id="EMD-12869"/>
<dbReference type="EMDB" id="EMD-12870"/>
<dbReference type="EMDB" id="EMD-12871"/>
<dbReference type="EMDB" id="EMD-12872"/>
<dbReference type="EMDB" id="EMD-12877"/>
<dbReference type="EMDB" id="EMD-12919"/>
<dbReference type="EMDB" id="EMD-12920"/>
<dbReference type="EMDB" id="EMD-12921"/>
<dbReference type="EMDB" id="EMD-12922"/>
<dbReference type="EMDB" id="EMD-12923"/>
<dbReference type="EMDB" id="EMD-12924"/>
<dbReference type="EMDB" id="EMD-12925"/>
<dbReference type="EMDB" id="EMD-12926"/>
<dbReference type="EMDB" id="EMD-12927"/>
<dbReference type="EMDB" id="EMD-13329"/>
<dbReference type="EMDB" id="EMD-13562"/>
<dbReference type="EMDB" id="EMD-13965"/>
<dbReference type="EMDB" id="EMD-13967"/>
<dbReference type="EMDB" id="EMD-13980"/>
<dbReference type="EMDB" id="EMD-13981"/>
<dbReference type="EMDB" id="EMD-13982"/>
<dbReference type="EMDB" id="EMD-15544"/>
<dbReference type="EMDB" id="EMD-16897"/>
<dbReference type="EMDB" id="EMD-16899"/>
<dbReference type="EMDB" id="EMD-17719"/>
<dbReference type="EMDB" id="EMD-19460"/>
<dbReference type="EMDB" id="EMD-21233"/>
<dbReference type="EMDB" id="EMD-21242"/>
<dbReference type="EMDB" id="EMD-23096"/>
<dbReference type="EMDB" id="EMD-23121"/>
<dbReference type="EMDB" id="EMD-36836"/>
<dbReference type="EMDB" id="EMD-36837"/>
<dbReference type="EMDB" id="EMD-3842"/>
<dbReference type="EMDB" id="EMD-3843"/>
<dbReference type="EMDB" id="EMD-38632"/>
<dbReference type="EMDB" id="EMD-38633"/>
<dbReference type="EMDB" id="EMD-38634"/>
<dbReference type="EMDB" id="EMD-38635"/>
<dbReference type="EMDB" id="EMD-4434"/>
<dbReference type="SMR" id="Q9BQC6"/>
<dbReference type="BioGRID" id="122459">
    <property type="interactions" value="112"/>
</dbReference>
<dbReference type="ComplexPortal" id="CPX-5226">
    <property type="entry name" value="39S mitochondrial large ribosomal subunit"/>
</dbReference>
<dbReference type="FunCoup" id="Q9BQC6">
    <property type="interactions" value="447"/>
</dbReference>
<dbReference type="IntAct" id="Q9BQC6">
    <property type="interactions" value="66"/>
</dbReference>
<dbReference type="MINT" id="Q9BQC6"/>
<dbReference type="STRING" id="9606.ENSP00000310726"/>
<dbReference type="GlyGen" id="Q9BQC6">
    <property type="glycosylation" value="2 sites, 1 N-linked glycan (1 site), 1 O-linked glycan (1 site)"/>
</dbReference>
<dbReference type="iPTMnet" id="Q9BQC6"/>
<dbReference type="PhosphoSitePlus" id="Q9BQC6"/>
<dbReference type="BioMuta" id="MRPL57"/>
<dbReference type="jPOST" id="Q9BQC6"/>
<dbReference type="MassIVE" id="Q9BQC6"/>
<dbReference type="PaxDb" id="9606-ENSP00000310726"/>
<dbReference type="PeptideAtlas" id="Q9BQC6"/>
<dbReference type="ProteomicsDB" id="78656"/>
<dbReference type="Pumba" id="Q9BQC6"/>
<dbReference type="TopDownProteomics" id="Q9BQC6"/>
<dbReference type="Antibodypedia" id="49702">
    <property type="antibodies" value="14 antibodies from 6 providers"/>
</dbReference>
<dbReference type="DNASU" id="78988"/>
<dbReference type="Ensembl" id="ENST00000309594.5">
    <property type="protein sequence ID" value="ENSP00000310726.4"/>
    <property type="gene ID" value="ENSG00000173141.5"/>
</dbReference>
<dbReference type="GeneID" id="78988"/>
<dbReference type="KEGG" id="hsa:78988"/>
<dbReference type="MANE-Select" id="ENST00000309594.5">
    <property type="protein sequence ID" value="ENSP00000310726.4"/>
    <property type="RefSeq nucleotide sequence ID" value="NM_024026.5"/>
    <property type="RefSeq protein sequence ID" value="NP_076931.1"/>
</dbReference>
<dbReference type="UCSC" id="uc001unw.4">
    <property type="organism name" value="human"/>
</dbReference>
<dbReference type="AGR" id="HGNC:14514"/>
<dbReference type="CTD" id="78988"/>
<dbReference type="GeneCards" id="MRPL57"/>
<dbReference type="HGNC" id="HGNC:14514">
    <property type="gene designation" value="MRPL57"/>
</dbReference>
<dbReference type="HPA" id="ENSG00000173141">
    <property type="expression patterns" value="Low tissue specificity"/>
</dbReference>
<dbReference type="MalaCards" id="MRPL57"/>
<dbReference type="MIM" id="611997">
    <property type="type" value="gene"/>
</dbReference>
<dbReference type="neXtProt" id="NX_Q9BQC6"/>
<dbReference type="OpenTargets" id="ENSG00000173141"/>
<dbReference type="PharmGKB" id="PA30937"/>
<dbReference type="VEuPathDB" id="HostDB:ENSG00000173141"/>
<dbReference type="eggNOG" id="ENOG502S44A">
    <property type="taxonomic scope" value="Eukaryota"/>
</dbReference>
<dbReference type="GeneTree" id="ENSGT00390000008171"/>
<dbReference type="HOGENOM" id="CLU_175792_1_0_1"/>
<dbReference type="InParanoid" id="Q9BQC6"/>
<dbReference type="OMA" id="QEFGHAA"/>
<dbReference type="OrthoDB" id="6019958at2759"/>
<dbReference type="PAN-GO" id="Q9BQC6">
    <property type="GO annotations" value="2 GO annotations based on evolutionary models"/>
</dbReference>
<dbReference type="PhylomeDB" id="Q9BQC6"/>
<dbReference type="TreeFam" id="TF324466"/>
<dbReference type="PathwayCommons" id="Q9BQC6"/>
<dbReference type="Reactome" id="R-HSA-5368286">
    <property type="pathway name" value="Mitochondrial translation initiation"/>
</dbReference>
<dbReference type="Reactome" id="R-HSA-5389840">
    <property type="pathway name" value="Mitochondrial translation elongation"/>
</dbReference>
<dbReference type="Reactome" id="R-HSA-5419276">
    <property type="pathway name" value="Mitochondrial translation termination"/>
</dbReference>
<dbReference type="SignaLink" id="Q9BQC6"/>
<dbReference type="SIGNOR" id="Q9BQC6"/>
<dbReference type="BioGRID-ORCS" id="78988">
    <property type="hits" value="590 hits in 1180 CRISPR screens"/>
</dbReference>
<dbReference type="ChiTaRS" id="MRPL57">
    <property type="organism name" value="human"/>
</dbReference>
<dbReference type="EvolutionaryTrace" id="Q9BQC6"/>
<dbReference type="GenomeRNAi" id="78988"/>
<dbReference type="Pharos" id="Q9BQC6">
    <property type="development level" value="Tdark"/>
</dbReference>
<dbReference type="PRO" id="PR:Q9BQC6"/>
<dbReference type="Proteomes" id="UP000005640">
    <property type="component" value="Chromosome 13"/>
</dbReference>
<dbReference type="RNAct" id="Q9BQC6">
    <property type="molecule type" value="protein"/>
</dbReference>
<dbReference type="Bgee" id="ENSG00000173141">
    <property type="expression patterns" value="Expressed in endothelial cell and 214 other cell types or tissues"/>
</dbReference>
<dbReference type="ExpressionAtlas" id="Q9BQC6">
    <property type="expression patterns" value="baseline and differential"/>
</dbReference>
<dbReference type="GO" id="GO:0005743">
    <property type="term" value="C:mitochondrial inner membrane"/>
    <property type="evidence" value="ECO:0000304"/>
    <property type="project" value="Reactome"/>
</dbReference>
<dbReference type="GO" id="GO:0005762">
    <property type="term" value="C:mitochondrial large ribosomal subunit"/>
    <property type="evidence" value="ECO:0000314"/>
    <property type="project" value="UniProtKB"/>
</dbReference>
<dbReference type="GO" id="GO:0005761">
    <property type="term" value="C:mitochondrial ribosome"/>
    <property type="evidence" value="ECO:0000250"/>
    <property type="project" value="UniProtKB"/>
</dbReference>
<dbReference type="GO" id="GO:0005739">
    <property type="term" value="C:mitochondrion"/>
    <property type="evidence" value="ECO:0000314"/>
    <property type="project" value="UniProtKB"/>
</dbReference>
<dbReference type="GO" id="GO:0003735">
    <property type="term" value="F:structural constituent of ribosome"/>
    <property type="evidence" value="ECO:0000250"/>
    <property type="project" value="UniProtKB"/>
</dbReference>
<dbReference type="GO" id="GO:0032543">
    <property type="term" value="P:mitochondrial translation"/>
    <property type="evidence" value="ECO:0000250"/>
    <property type="project" value="UniProtKB"/>
</dbReference>
<dbReference type="InterPro" id="IPR016576">
    <property type="entry name" value="Ribosomal_mL63"/>
</dbReference>
<dbReference type="PANTHER" id="PTHR14520:SF4">
    <property type="entry name" value="LARGE RIBOSOMAL SUBUNIT PROTEIN ML63"/>
    <property type="match status" value="1"/>
</dbReference>
<dbReference type="PANTHER" id="PTHR14520">
    <property type="entry name" value="MITOCHONDRIAL RIBOSOMAL PROTEIN 63"/>
    <property type="match status" value="1"/>
</dbReference>
<dbReference type="Pfam" id="PF14978">
    <property type="entry name" value="MRP-63"/>
    <property type="match status" value="1"/>
</dbReference>
<dbReference type="PIRSF" id="PIRSF011124">
    <property type="entry name" value="MRP63"/>
    <property type="match status" value="1"/>
</dbReference>
<accession>Q9BQC6</accession>
<accession>A2A332</accession>
<gene>
    <name type="primary">MRPL57</name>
    <name type="synonym">MRP63</name>
</gene>
<evidence type="ECO:0000269" key="1">
    <source>
    </source>
</evidence>
<evidence type="ECO:0000269" key="2">
    <source>
    </source>
</evidence>
<evidence type="ECO:0000269" key="3">
    <source>
    </source>
</evidence>
<evidence type="ECO:0000269" key="4">
    <source>
    </source>
</evidence>
<evidence type="ECO:0000303" key="5">
    <source>
    </source>
</evidence>
<evidence type="ECO:0000305" key="6"/>
<evidence type="ECO:0007744" key="7">
    <source>
        <dbReference type="PDB" id="5OOL"/>
    </source>
</evidence>
<evidence type="ECO:0007744" key="8">
    <source>
        <dbReference type="PDB" id="5OOM"/>
    </source>
</evidence>
<evidence type="ECO:0007744" key="9">
    <source>
        <dbReference type="PDB" id="7QH6"/>
    </source>
</evidence>
<evidence type="ECO:0007744" key="10">
    <source>
        <dbReference type="PDB" id="7QH7"/>
    </source>
</evidence>
<evidence type="ECO:0007829" key="11">
    <source>
        <dbReference type="PDB" id="3J7Y"/>
    </source>
</evidence>
<evidence type="ECO:0007829" key="12">
    <source>
        <dbReference type="PDB" id="5OOL"/>
    </source>
</evidence>
<evidence type="ECO:0007829" key="13">
    <source>
        <dbReference type="PDB" id="7OF0"/>
    </source>
</evidence>
<reference key="1">
    <citation type="journal article" date="2001" name="J. Biol. Chem.">
        <title>Proteomic analysis of the mammalian mitochondrial ribosome. Identification of protein components in the 28S small subunit.</title>
        <authorList>
            <person name="Suzuki T."/>
            <person name="Terasaki M."/>
            <person name="Takemoto-Hori C."/>
            <person name="Hanada T."/>
            <person name="Ueda T."/>
            <person name="Wada A."/>
            <person name="Watanabe K."/>
        </authorList>
    </citation>
    <scope>NUCLEOTIDE SEQUENCE [MRNA]</scope>
</reference>
<reference key="2">
    <citation type="journal article" date="2004" name="Nature">
        <title>The DNA sequence and analysis of human chromosome 13.</title>
        <authorList>
            <person name="Dunham A."/>
            <person name="Matthews L.H."/>
            <person name="Burton J."/>
            <person name="Ashurst J.L."/>
            <person name="Howe K.L."/>
            <person name="Ashcroft K.J."/>
            <person name="Beare D.M."/>
            <person name="Burford D.C."/>
            <person name="Hunt S.E."/>
            <person name="Griffiths-Jones S."/>
            <person name="Jones M.C."/>
            <person name="Keenan S.J."/>
            <person name="Oliver K."/>
            <person name="Scott C.E."/>
            <person name="Ainscough R."/>
            <person name="Almeida J.P."/>
            <person name="Ambrose K.D."/>
            <person name="Andrews D.T."/>
            <person name="Ashwell R.I.S."/>
            <person name="Babbage A.K."/>
            <person name="Bagguley C.L."/>
            <person name="Bailey J."/>
            <person name="Bannerjee R."/>
            <person name="Barlow K.F."/>
            <person name="Bates K."/>
            <person name="Beasley H."/>
            <person name="Bird C.P."/>
            <person name="Bray-Allen S."/>
            <person name="Brown A.J."/>
            <person name="Brown J.Y."/>
            <person name="Burrill W."/>
            <person name="Carder C."/>
            <person name="Carter N.P."/>
            <person name="Chapman J.C."/>
            <person name="Clamp M.E."/>
            <person name="Clark S.Y."/>
            <person name="Clarke G."/>
            <person name="Clee C.M."/>
            <person name="Clegg S.C."/>
            <person name="Cobley V."/>
            <person name="Collins J.E."/>
            <person name="Corby N."/>
            <person name="Coville G.J."/>
            <person name="Deloukas P."/>
            <person name="Dhami P."/>
            <person name="Dunham I."/>
            <person name="Dunn M."/>
            <person name="Earthrowl M.E."/>
            <person name="Ellington A.G."/>
            <person name="Faulkner L."/>
            <person name="Frankish A.G."/>
            <person name="Frankland J."/>
            <person name="French L."/>
            <person name="Garner P."/>
            <person name="Garnett J."/>
            <person name="Gilbert J.G.R."/>
            <person name="Gilson C.J."/>
            <person name="Ghori J."/>
            <person name="Grafham D.V."/>
            <person name="Gribble S.M."/>
            <person name="Griffiths C."/>
            <person name="Hall R.E."/>
            <person name="Hammond S."/>
            <person name="Harley J.L."/>
            <person name="Hart E.A."/>
            <person name="Heath P.D."/>
            <person name="Howden P.J."/>
            <person name="Huckle E.J."/>
            <person name="Hunt P.J."/>
            <person name="Hunt A.R."/>
            <person name="Johnson C."/>
            <person name="Johnson D."/>
            <person name="Kay M."/>
            <person name="Kimberley A.M."/>
            <person name="King A."/>
            <person name="Laird G.K."/>
            <person name="Langford C.J."/>
            <person name="Lawlor S."/>
            <person name="Leongamornlert D.A."/>
            <person name="Lloyd D.M."/>
            <person name="Lloyd C."/>
            <person name="Loveland J.E."/>
            <person name="Lovell J."/>
            <person name="Martin S."/>
            <person name="Mashreghi-Mohammadi M."/>
            <person name="McLaren S.J."/>
            <person name="McMurray A."/>
            <person name="Milne S."/>
            <person name="Moore M.J.F."/>
            <person name="Nickerson T."/>
            <person name="Palmer S.A."/>
            <person name="Pearce A.V."/>
            <person name="Peck A.I."/>
            <person name="Pelan S."/>
            <person name="Phillimore B."/>
            <person name="Porter K.M."/>
            <person name="Rice C.M."/>
            <person name="Searle S."/>
            <person name="Sehra H.K."/>
            <person name="Shownkeen R."/>
            <person name="Skuce C.D."/>
            <person name="Smith M."/>
            <person name="Steward C.A."/>
            <person name="Sycamore N."/>
            <person name="Tester J."/>
            <person name="Thomas D.W."/>
            <person name="Tracey A."/>
            <person name="Tromans A."/>
            <person name="Tubby B."/>
            <person name="Wall M."/>
            <person name="Wallis J.M."/>
            <person name="West A.P."/>
            <person name="Whitehead S.L."/>
            <person name="Willey D.L."/>
            <person name="Wilming L."/>
            <person name="Wray P.W."/>
            <person name="Wright M.W."/>
            <person name="Young L."/>
            <person name="Coulson A."/>
            <person name="Durbin R.M."/>
            <person name="Hubbard T."/>
            <person name="Sulston J.E."/>
            <person name="Beck S."/>
            <person name="Bentley D.R."/>
            <person name="Rogers J."/>
            <person name="Ross M.T."/>
        </authorList>
    </citation>
    <scope>NUCLEOTIDE SEQUENCE [LARGE SCALE GENOMIC DNA]</scope>
</reference>
<reference key="3">
    <citation type="submission" date="2005-07" db="EMBL/GenBank/DDBJ databases">
        <authorList>
            <person name="Mural R.J."/>
            <person name="Istrail S."/>
            <person name="Sutton G.G."/>
            <person name="Florea L."/>
            <person name="Halpern A.L."/>
            <person name="Mobarry C.M."/>
            <person name="Lippert R."/>
            <person name="Walenz B."/>
            <person name="Shatkay H."/>
            <person name="Dew I."/>
            <person name="Miller J.R."/>
            <person name="Flanigan M.J."/>
            <person name="Edwards N.J."/>
            <person name="Bolanos R."/>
            <person name="Fasulo D."/>
            <person name="Halldorsson B.V."/>
            <person name="Hannenhalli S."/>
            <person name="Turner R."/>
            <person name="Yooseph S."/>
            <person name="Lu F."/>
            <person name="Nusskern D.R."/>
            <person name="Shue B.C."/>
            <person name="Zheng X.H."/>
            <person name="Zhong F."/>
            <person name="Delcher A.L."/>
            <person name="Huson D.H."/>
            <person name="Kravitz S.A."/>
            <person name="Mouchard L."/>
            <person name="Reinert K."/>
            <person name="Remington K.A."/>
            <person name="Clark A.G."/>
            <person name="Waterman M.S."/>
            <person name="Eichler E.E."/>
            <person name="Adams M.D."/>
            <person name="Hunkapiller M.W."/>
            <person name="Myers E.W."/>
            <person name="Venter J.C."/>
        </authorList>
    </citation>
    <scope>NUCLEOTIDE SEQUENCE [LARGE SCALE GENOMIC DNA]</scope>
</reference>
<reference key="4">
    <citation type="journal article" date="2004" name="Genome Res.">
        <title>The status, quality, and expansion of the NIH full-length cDNA project: the Mammalian Gene Collection (MGC).</title>
        <authorList>
            <consortium name="The MGC Project Team"/>
        </authorList>
    </citation>
    <scope>NUCLEOTIDE SEQUENCE [LARGE SCALE MRNA]</scope>
    <source>
        <tissue>Eye</tissue>
        <tissue>Hypothalamus</tissue>
    </source>
</reference>
<reference key="5">
    <citation type="journal article" date="2011" name="BMC Syst. Biol.">
        <title>Initial characterization of the human central proteome.</title>
        <authorList>
            <person name="Burkard T.R."/>
            <person name="Planyavsky M."/>
            <person name="Kaupe I."/>
            <person name="Breitwieser F.P."/>
            <person name="Buerckstuemmer T."/>
            <person name="Bennett K.L."/>
            <person name="Superti-Furga G."/>
            <person name="Colinge J."/>
        </authorList>
    </citation>
    <scope>IDENTIFICATION BY MASS SPECTROMETRY [LARGE SCALE ANALYSIS]</scope>
</reference>
<reference key="6">
    <citation type="journal article" date="2015" name="Proteomics">
        <title>N-terminome analysis of the human mitochondrial proteome.</title>
        <authorList>
            <person name="Vaca Jacome A.S."/>
            <person name="Rabilloud T."/>
            <person name="Schaeffer-Reiss C."/>
            <person name="Rompais M."/>
            <person name="Ayoub D."/>
            <person name="Lane L."/>
            <person name="Bairoch A."/>
            <person name="Van Dorsselaer A."/>
            <person name="Carapito C."/>
        </authorList>
    </citation>
    <scope>IDENTIFICATION BY MASS SPECTROMETRY [LARGE SCALE ANALYSIS]</scope>
</reference>
<reference key="7">
    <citation type="journal article" date="2014" name="Science">
        <title>Structure of the large ribosomal subunit from human mitochondria.</title>
        <authorList>
            <person name="Brown A."/>
            <person name="Amunts A."/>
            <person name="Bai X.C."/>
            <person name="Sugimoto Y."/>
            <person name="Edwards P.C."/>
            <person name="Murshudov G."/>
            <person name="Scheres S.H."/>
            <person name="Ramakrishnan V."/>
        </authorList>
    </citation>
    <scope>STRUCTURE BY ELECTRON MICROSCOPY (3.40 ANGSTROMS)</scope>
    <scope>SUBCELLULAR LOCATION</scope>
    <scope>SUBUNIT</scope>
</reference>
<reference key="8">
    <citation type="journal article" date="2015" name="Science">
        <title>Ribosome. The structure of the human mitochondrial ribosome.</title>
        <authorList>
            <person name="Amunts A."/>
            <person name="Brown A."/>
            <person name="Toots J."/>
            <person name="Scheres S.H."/>
            <person name="Ramakrishnan V."/>
        </authorList>
    </citation>
    <scope>STRUCTURE BY ELECTRON MICROSCOPY (3.50 ANGSTROMS)</scope>
    <scope>SUBCELLULAR LOCATION</scope>
    <scope>SUBUNIT</scope>
</reference>
<reference evidence="7 8" key="9">
    <citation type="journal article" date="2017" name="Nat. Struct. Mol. Biol.">
        <title>Structures of the human mitochondrial ribosome in native states of assembly.</title>
        <authorList>
            <person name="Brown A."/>
            <person name="Rathore S."/>
            <person name="Kimanius D."/>
            <person name="Aibara S."/>
            <person name="Bai X.C."/>
            <person name="Rorbach J."/>
            <person name="Amunts A."/>
            <person name="Ramakrishnan V."/>
        </authorList>
    </citation>
    <scope>STRUCTURE BY ELECTRON MICROSCOPY (3.03 ANGSTROMS)</scope>
    <scope>SUBCELLULAR LOCATION</scope>
    <scope>SUBUNIT</scope>
</reference>
<reference evidence="9 10" key="10">
    <citation type="journal article" date="2022" name="Nat. Commun.">
        <title>A late-stage assembly checkpoint of the human mitochondrial ribosome large subunit.</title>
        <authorList>
            <person name="Rebelo-Guiomar P."/>
            <person name="Pellegrino S."/>
            <person name="Dent K.C."/>
            <person name="Sas-Chen A."/>
            <person name="Miller-Fleming L."/>
            <person name="Garone C."/>
            <person name="Van Haute L."/>
            <person name="Rogan J.F."/>
            <person name="Dinan A."/>
            <person name="Firth A.E."/>
            <person name="Andrews B."/>
            <person name="Whitworth A.J."/>
            <person name="Schwartz S."/>
            <person name="Warren A.J."/>
            <person name="Minczuk M."/>
        </authorList>
    </citation>
    <scope>STRUCTURE BY ELECTRON MICROSCOPY (2.9 ANGSTROMS) IN COMPLEX WITH MTLSU</scope>
    <scope>SUBUNIT</scope>
</reference>
<sequence length="102" mass="12266">MFLTALLWRGRIPGRQWIGKHRRPRFVSLRAKQNMIRRLEIEAENHYWLSMPYMTREQERGHAAVRRREAFEAIKAAATSKFPPHRFIADQLDHLNVTKKWS</sequence>
<name>RT63_HUMAN</name>
<proteinExistence type="evidence at protein level"/>
<organism>
    <name type="scientific">Homo sapiens</name>
    <name type="common">Human</name>
    <dbReference type="NCBI Taxonomy" id="9606"/>
    <lineage>
        <taxon>Eukaryota</taxon>
        <taxon>Metazoa</taxon>
        <taxon>Chordata</taxon>
        <taxon>Craniata</taxon>
        <taxon>Vertebrata</taxon>
        <taxon>Euteleostomi</taxon>
        <taxon>Mammalia</taxon>
        <taxon>Eutheria</taxon>
        <taxon>Euarchontoglires</taxon>
        <taxon>Primates</taxon>
        <taxon>Haplorrhini</taxon>
        <taxon>Catarrhini</taxon>
        <taxon>Hominidae</taxon>
        <taxon>Homo</taxon>
    </lineage>
</organism>